<name>PSAB_PROM0</name>
<evidence type="ECO:0000255" key="1">
    <source>
        <dbReference type="HAMAP-Rule" id="MF_00482"/>
    </source>
</evidence>
<gene>
    <name evidence="1" type="primary">psaB</name>
    <name type="ordered locus">P9301_17151</name>
</gene>
<proteinExistence type="inferred from homology"/>
<feature type="chain" id="PRO_0000300017" description="Photosystem I P700 chlorophyll a apoprotein A2">
    <location>
        <begin position="1"/>
        <end position="742"/>
    </location>
</feature>
<feature type="transmembrane region" description="Helical; Name=I" evidence="1">
    <location>
        <begin position="46"/>
        <end position="69"/>
    </location>
</feature>
<feature type="transmembrane region" description="Helical; Name=II" evidence="1">
    <location>
        <begin position="135"/>
        <end position="158"/>
    </location>
</feature>
<feature type="transmembrane region" description="Helical; Name=III" evidence="1">
    <location>
        <begin position="175"/>
        <end position="199"/>
    </location>
</feature>
<feature type="transmembrane region" description="Helical; Name=IV" evidence="1">
    <location>
        <begin position="273"/>
        <end position="291"/>
    </location>
</feature>
<feature type="transmembrane region" description="Helical; Name=V" evidence="1">
    <location>
        <begin position="336"/>
        <end position="359"/>
    </location>
</feature>
<feature type="transmembrane region" description="Helical; Name=VI" evidence="1">
    <location>
        <begin position="375"/>
        <end position="401"/>
    </location>
</feature>
<feature type="transmembrane region" description="Helical; Name=VII" evidence="1">
    <location>
        <begin position="423"/>
        <end position="445"/>
    </location>
</feature>
<feature type="transmembrane region" description="Helical; Name=VIII" evidence="1">
    <location>
        <begin position="525"/>
        <end position="543"/>
    </location>
</feature>
<feature type="transmembrane region" description="Helical; Name=IX" evidence="1">
    <location>
        <begin position="583"/>
        <end position="604"/>
    </location>
</feature>
<feature type="transmembrane region" description="Helical; Name=X" evidence="1">
    <location>
        <begin position="651"/>
        <end position="673"/>
    </location>
</feature>
<feature type="transmembrane region" description="Helical; Name=XI" evidence="1">
    <location>
        <begin position="715"/>
        <end position="735"/>
    </location>
</feature>
<feature type="binding site" evidence="1">
    <location>
        <position position="567"/>
    </location>
    <ligand>
        <name>[4Fe-4S] cluster</name>
        <dbReference type="ChEBI" id="CHEBI:49883"/>
        <note>ligand shared between dimeric partners</note>
    </ligand>
</feature>
<feature type="binding site" evidence="1">
    <location>
        <position position="576"/>
    </location>
    <ligand>
        <name>[4Fe-4S] cluster</name>
        <dbReference type="ChEBI" id="CHEBI:49883"/>
        <note>ligand shared between dimeric partners</note>
    </ligand>
</feature>
<feature type="binding site" description="axial binding residue" evidence="1">
    <location>
        <position position="662"/>
    </location>
    <ligand>
        <name>divinyl chlorophyll a</name>
        <dbReference type="ChEBI" id="CHEBI:73095"/>
        <label>B1</label>
    </ligand>
    <ligandPart>
        <name>Mg</name>
        <dbReference type="ChEBI" id="CHEBI:25107"/>
    </ligandPart>
</feature>
<feature type="binding site" description="axial binding residue" evidence="1">
    <location>
        <position position="670"/>
    </location>
    <ligand>
        <name>divinyl chlorophyll a</name>
        <dbReference type="ChEBI" id="CHEBI:73095"/>
        <label>B3</label>
    </ligand>
    <ligandPart>
        <name>Mg</name>
        <dbReference type="ChEBI" id="CHEBI:25107"/>
    </ligandPart>
</feature>
<feature type="binding site" evidence="1">
    <location>
        <position position="678"/>
    </location>
    <ligand>
        <name>divinyl chlorophyll a</name>
        <dbReference type="ChEBI" id="CHEBI:73095"/>
        <label>B3</label>
    </ligand>
</feature>
<feature type="binding site" evidence="1">
    <location>
        <position position="679"/>
    </location>
    <ligand>
        <name>phylloquinone</name>
        <dbReference type="ChEBI" id="CHEBI:18067"/>
        <label>B</label>
    </ligand>
</feature>
<reference key="1">
    <citation type="journal article" date="2007" name="PLoS Genet.">
        <title>Patterns and implications of gene gain and loss in the evolution of Prochlorococcus.</title>
        <authorList>
            <person name="Kettler G.C."/>
            <person name="Martiny A.C."/>
            <person name="Huang K."/>
            <person name="Zucker J."/>
            <person name="Coleman M.L."/>
            <person name="Rodrigue S."/>
            <person name="Chen F."/>
            <person name="Lapidus A."/>
            <person name="Ferriera S."/>
            <person name="Johnson J."/>
            <person name="Steglich C."/>
            <person name="Church G.M."/>
            <person name="Richardson P."/>
            <person name="Chisholm S.W."/>
        </authorList>
    </citation>
    <scope>NUCLEOTIDE SEQUENCE [LARGE SCALE GENOMIC DNA]</scope>
    <source>
        <strain>MIT 9301</strain>
    </source>
</reference>
<dbReference type="EC" id="1.97.1.12" evidence="1"/>
<dbReference type="EMBL" id="CP000576">
    <property type="protein sequence ID" value="ABO18338.1"/>
    <property type="molecule type" value="Genomic_DNA"/>
</dbReference>
<dbReference type="RefSeq" id="WP_011819135.1">
    <property type="nucleotide sequence ID" value="NC_009091.1"/>
</dbReference>
<dbReference type="SMR" id="A3PF13"/>
<dbReference type="STRING" id="167546.P9301_17151"/>
<dbReference type="KEGG" id="pmg:P9301_17151"/>
<dbReference type="eggNOG" id="COG2885">
    <property type="taxonomic scope" value="Bacteria"/>
</dbReference>
<dbReference type="HOGENOM" id="CLU_016126_1_0_3"/>
<dbReference type="OrthoDB" id="499313at2"/>
<dbReference type="Proteomes" id="UP000001430">
    <property type="component" value="Chromosome"/>
</dbReference>
<dbReference type="GO" id="GO:0009522">
    <property type="term" value="C:photosystem I"/>
    <property type="evidence" value="ECO:0007669"/>
    <property type="project" value="UniProtKB-KW"/>
</dbReference>
<dbReference type="GO" id="GO:0031676">
    <property type="term" value="C:plasma membrane-derived thylakoid membrane"/>
    <property type="evidence" value="ECO:0007669"/>
    <property type="project" value="UniProtKB-SubCell"/>
</dbReference>
<dbReference type="GO" id="GO:0051539">
    <property type="term" value="F:4 iron, 4 sulfur cluster binding"/>
    <property type="evidence" value="ECO:0007669"/>
    <property type="project" value="UniProtKB-KW"/>
</dbReference>
<dbReference type="GO" id="GO:0016168">
    <property type="term" value="F:chlorophyll binding"/>
    <property type="evidence" value="ECO:0007669"/>
    <property type="project" value="UniProtKB-KW"/>
</dbReference>
<dbReference type="GO" id="GO:0009055">
    <property type="term" value="F:electron transfer activity"/>
    <property type="evidence" value="ECO:0007669"/>
    <property type="project" value="UniProtKB-UniRule"/>
</dbReference>
<dbReference type="GO" id="GO:0000287">
    <property type="term" value="F:magnesium ion binding"/>
    <property type="evidence" value="ECO:0007669"/>
    <property type="project" value="UniProtKB-UniRule"/>
</dbReference>
<dbReference type="GO" id="GO:0016491">
    <property type="term" value="F:oxidoreductase activity"/>
    <property type="evidence" value="ECO:0007669"/>
    <property type="project" value="UniProtKB-KW"/>
</dbReference>
<dbReference type="GO" id="GO:0015979">
    <property type="term" value="P:photosynthesis"/>
    <property type="evidence" value="ECO:0007669"/>
    <property type="project" value="UniProtKB-UniRule"/>
</dbReference>
<dbReference type="FunFam" id="1.20.1130.10:FF:000001">
    <property type="entry name" value="Photosystem I P700 chlorophyll a apoprotein A2"/>
    <property type="match status" value="1"/>
</dbReference>
<dbReference type="Gene3D" id="1.20.1130.10">
    <property type="entry name" value="Photosystem I PsaA/PsaB"/>
    <property type="match status" value="1"/>
</dbReference>
<dbReference type="HAMAP" id="MF_00482">
    <property type="entry name" value="PSI_PsaB"/>
    <property type="match status" value="1"/>
</dbReference>
<dbReference type="InterPro" id="IPR001280">
    <property type="entry name" value="PSI_PsaA/B"/>
</dbReference>
<dbReference type="InterPro" id="IPR020586">
    <property type="entry name" value="PSI_PsaA/B_CS"/>
</dbReference>
<dbReference type="InterPro" id="IPR036408">
    <property type="entry name" value="PSI_PsaA/B_sf"/>
</dbReference>
<dbReference type="InterPro" id="IPR006244">
    <property type="entry name" value="PSI_PsaB"/>
</dbReference>
<dbReference type="NCBIfam" id="TIGR01336">
    <property type="entry name" value="psaB"/>
    <property type="match status" value="1"/>
</dbReference>
<dbReference type="PANTHER" id="PTHR30128">
    <property type="entry name" value="OUTER MEMBRANE PROTEIN, OMPA-RELATED"/>
    <property type="match status" value="1"/>
</dbReference>
<dbReference type="PANTHER" id="PTHR30128:SF19">
    <property type="entry name" value="PHOTOSYSTEM I P700 CHLOROPHYLL A APOPROTEIN A1-RELATED"/>
    <property type="match status" value="1"/>
</dbReference>
<dbReference type="Pfam" id="PF00223">
    <property type="entry name" value="PsaA_PsaB"/>
    <property type="match status" value="1"/>
</dbReference>
<dbReference type="PIRSF" id="PIRSF002905">
    <property type="entry name" value="PSI_A"/>
    <property type="match status" value="1"/>
</dbReference>
<dbReference type="PRINTS" id="PR00257">
    <property type="entry name" value="PHOTSYSPSAAB"/>
</dbReference>
<dbReference type="SUPFAM" id="SSF81558">
    <property type="entry name" value="Photosystem I subunits PsaA/PsaB"/>
    <property type="match status" value="1"/>
</dbReference>
<dbReference type="PROSITE" id="PS00419">
    <property type="entry name" value="PHOTOSYSTEM_I_PSAAB"/>
    <property type="match status" value="1"/>
</dbReference>
<sequence length="742" mass="82671">MATKFPSFNQGLAQDPTTRRIWYGIATAHDFESHDGMTEEKLYQKLFSTHFGHLAIIALWVAGNLFHIAWQGNFEQFVLDPTHVRPIAHAIWDPHFGSGITEAMTQAGASGPVNIAYSGLYHWWYTIGMRTNEQLFQASIFMSILACWTLFAGWLHLQPKFRPSLAWFKNAESRLNHHLAVLFGFSSIAWTGHLVHVAIPESRGQHVGWDNWLTVLPHPAGLAPFFTLNWGAYAQNPDSLDQVFGTAEGAGTAIFTFLGGLHPQSEALWLTDIAHHHIAIGTVFVIAGHMYRNTFGIGHSLKEITEAHNTRHPNDPHKGSFGINHDGIYETVNNSLHFQLGLALASLGVATSLVAQHMGALPSYAFIARDYTTQSALYSHHQYIAMFLMVGAFAHGAIFFVRDYDPELNKDNVLARVLGTKEALISHLSWVTMLLGFHTLGIYVHNDVVVAFGNPEKQILIEPVFAQFVQAAQGKMMYGFNALLSDPTSSASLAANSLPGNHYWMDLINRQDALSAFLPIGPADFLVHHAIALGLHTTALILIKGALDARGTKLIPDKKDLGYAFPCDGPGRGGTCDSSSWDAMYLAMFWALNLLAWVTFYWHWKHLAIWQGNVAQFNESGTYLMGWFRDYLWLNSAQLINGYNPFGVNSLSPWAWMFLFGHLVWATGFMFLISWRGYWQELIETLVWAHQRTPIANLVGWRDKPVALSIVQARLVGLAHFTIGNILTFGAFVIASTSGKFG</sequence>
<accession>A3PF13</accession>
<comment type="function">
    <text evidence="1">PsaA and PsaB bind P700, the primary electron donor of photosystem I (PSI), as well as the electron acceptors A0, A1 and FX. PSI is a plastocyanin/cytochrome c6-ferredoxin oxidoreductase, converting photonic excitation into a charge separation, which transfers an electron from the donor P700 chlorophyll pair to the spectroscopically characterized acceptors A0, A1, FX, FA and FB in turn. Oxidized P700 is reduced on the lumenal side of the thylakoid membrane by plastocyanin or cytochrome c6.</text>
</comment>
<comment type="catalytic activity">
    <reaction evidence="1">
        <text>reduced [plastocyanin] + hnu + oxidized [2Fe-2S]-[ferredoxin] = oxidized [plastocyanin] + reduced [2Fe-2S]-[ferredoxin]</text>
        <dbReference type="Rhea" id="RHEA:30407"/>
        <dbReference type="Rhea" id="RHEA-COMP:10000"/>
        <dbReference type="Rhea" id="RHEA-COMP:10001"/>
        <dbReference type="Rhea" id="RHEA-COMP:10039"/>
        <dbReference type="Rhea" id="RHEA-COMP:10040"/>
        <dbReference type="ChEBI" id="CHEBI:29036"/>
        <dbReference type="ChEBI" id="CHEBI:30212"/>
        <dbReference type="ChEBI" id="CHEBI:33737"/>
        <dbReference type="ChEBI" id="CHEBI:33738"/>
        <dbReference type="ChEBI" id="CHEBI:49552"/>
        <dbReference type="EC" id="1.97.1.12"/>
    </reaction>
</comment>
<comment type="cofactor">
    <text evidence="1">PSI electron transfer chain: 5 divinyl chlorophyll a, 1 divinyl chlorophyll a', 2 phylloquinones and 3 4Fe-4S clusters. PSI core antenna: 90 divinyl chlorophyll a, 22 carotenoids, 3 phospholipids and 1 galactolipid. P700 is a divinyl chlorophyll a/divinyl chlorophyll a' dimer, A0 is one or more divinyl chlorophyll a, A1 is one or both phylloquinones and FX is a shared 4Fe-4S iron-sulfur center.</text>
</comment>
<comment type="subunit">
    <text evidence="1">The PsaA/B heterodimer binds the P700 divinyl chlorophyll special pair and subsequent electron acceptors. PSI consists of a core antenna complex that captures photons, and an electron transfer chain that converts photonic excitation into a charge separation. The cyanobacterial PSI reaction center is composed of one copy each of PsaA,B,C,D,E,F,I,J,K,L,M and X, and forms trimeric complexes.</text>
</comment>
<comment type="subcellular location">
    <subcellularLocation>
        <location evidence="1">Cellular thylakoid membrane</location>
        <topology evidence="1">Multi-pass membrane protein</topology>
    </subcellularLocation>
</comment>
<comment type="similarity">
    <text evidence="1">Belongs to the PsaA/PsaB family.</text>
</comment>
<organism>
    <name type="scientific">Prochlorococcus marinus (strain MIT 9301)</name>
    <dbReference type="NCBI Taxonomy" id="167546"/>
    <lineage>
        <taxon>Bacteria</taxon>
        <taxon>Bacillati</taxon>
        <taxon>Cyanobacteriota</taxon>
        <taxon>Cyanophyceae</taxon>
        <taxon>Synechococcales</taxon>
        <taxon>Prochlorococcaceae</taxon>
        <taxon>Prochlorococcus</taxon>
    </lineage>
</organism>
<protein>
    <recommendedName>
        <fullName evidence="1">Photosystem I P700 chlorophyll a apoprotein A2</fullName>
        <ecNumber evidence="1">1.97.1.12</ecNumber>
    </recommendedName>
    <alternativeName>
        <fullName evidence="1">PsaB</fullName>
    </alternativeName>
</protein>
<keyword id="KW-0004">4Fe-4S</keyword>
<keyword id="KW-0148">Chlorophyll</keyword>
<keyword id="KW-0157">Chromophore</keyword>
<keyword id="KW-0249">Electron transport</keyword>
<keyword id="KW-0408">Iron</keyword>
<keyword id="KW-0411">Iron-sulfur</keyword>
<keyword id="KW-0460">Magnesium</keyword>
<keyword id="KW-0472">Membrane</keyword>
<keyword id="KW-0479">Metal-binding</keyword>
<keyword id="KW-0560">Oxidoreductase</keyword>
<keyword id="KW-0602">Photosynthesis</keyword>
<keyword id="KW-0603">Photosystem I</keyword>
<keyword id="KW-1185">Reference proteome</keyword>
<keyword id="KW-0793">Thylakoid</keyword>
<keyword id="KW-0812">Transmembrane</keyword>
<keyword id="KW-1133">Transmembrane helix</keyword>
<keyword id="KW-0813">Transport</keyword>